<comment type="function">
    <text evidence="1">Associates with the EF-Tu.GDP complex and induces the exchange of GDP to GTP. It remains bound to the aminoacyl-tRNA.EF-Tu.GTP complex up to the GTP hydrolysis stage on the ribosome.</text>
</comment>
<comment type="subcellular location">
    <subcellularLocation>
        <location evidence="1">Cytoplasm</location>
    </subcellularLocation>
</comment>
<comment type="similarity">
    <text evidence="1">Belongs to the EF-Ts family.</text>
</comment>
<evidence type="ECO:0000255" key="1">
    <source>
        <dbReference type="HAMAP-Rule" id="MF_00050"/>
    </source>
</evidence>
<protein>
    <recommendedName>
        <fullName evidence="1">Elongation factor Ts</fullName>
        <shortName evidence="1">EF-Ts</shortName>
    </recommendedName>
</protein>
<dbReference type="EMBL" id="AL513382">
    <property type="protein sequence ID" value="CAD08675.1"/>
    <property type="molecule type" value="Genomic_DNA"/>
</dbReference>
<dbReference type="EMBL" id="AE014613">
    <property type="protein sequence ID" value="AAO67948.1"/>
    <property type="molecule type" value="Genomic_DNA"/>
</dbReference>
<dbReference type="RefSeq" id="NP_454824.1">
    <property type="nucleotide sequence ID" value="NC_003198.1"/>
</dbReference>
<dbReference type="RefSeq" id="WP_000808106.1">
    <property type="nucleotide sequence ID" value="NZ_WSUR01000009.1"/>
</dbReference>
<dbReference type="SMR" id="P64053"/>
<dbReference type="STRING" id="220341.gene:17584273"/>
<dbReference type="KEGG" id="stt:t0218"/>
<dbReference type="KEGG" id="sty:STY0240"/>
<dbReference type="PATRIC" id="fig|220341.7.peg.240"/>
<dbReference type="eggNOG" id="COG0264">
    <property type="taxonomic scope" value="Bacteria"/>
</dbReference>
<dbReference type="HOGENOM" id="CLU_047155_0_2_6"/>
<dbReference type="OMA" id="DAGMMDC"/>
<dbReference type="OrthoDB" id="9808348at2"/>
<dbReference type="Proteomes" id="UP000000541">
    <property type="component" value="Chromosome"/>
</dbReference>
<dbReference type="Proteomes" id="UP000002670">
    <property type="component" value="Chromosome"/>
</dbReference>
<dbReference type="GO" id="GO:0005737">
    <property type="term" value="C:cytoplasm"/>
    <property type="evidence" value="ECO:0007669"/>
    <property type="project" value="UniProtKB-SubCell"/>
</dbReference>
<dbReference type="GO" id="GO:0003746">
    <property type="term" value="F:translation elongation factor activity"/>
    <property type="evidence" value="ECO:0007669"/>
    <property type="project" value="UniProtKB-UniRule"/>
</dbReference>
<dbReference type="CDD" id="cd14275">
    <property type="entry name" value="UBA_EF-Ts"/>
    <property type="match status" value="1"/>
</dbReference>
<dbReference type="FunFam" id="1.10.286.20:FF:000001">
    <property type="entry name" value="Elongation factor Ts"/>
    <property type="match status" value="1"/>
</dbReference>
<dbReference type="FunFam" id="1.10.8.10:FF:000001">
    <property type="entry name" value="Elongation factor Ts"/>
    <property type="match status" value="1"/>
</dbReference>
<dbReference type="FunFam" id="3.30.479.20:FF:000001">
    <property type="entry name" value="Elongation factor Ts"/>
    <property type="match status" value="1"/>
</dbReference>
<dbReference type="Gene3D" id="1.10.286.20">
    <property type="match status" value="1"/>
</dbReference>
<dbReference type="Gene3D" id="1.10.8.10">
    <property type="entry name" value="DNA helicase RuvA subunit, C-terminal domain"/>
    <property type="match status" value="1"/>
</dbReference>
<dbReference type="Gene3D" id="3.30.479.20">
    <property type="entry name" value="Elongation factor Ts, dimerisation domain"/>
    <property type="match status" value="2"/>
</dbReference>
<dbReference type="HAMAP" id="MF_00050">
    <property type="entry name" value="EF_Ts"/>
    <property type="match status" value="1"/>
</dbReference>
<dbReference type="InterPro" id="IPR036402">
    <property type="entry name" value="EF-Ts_dimer_sf"/>
</dbReference>
<dbReference type="InterPro" id="IPR001816">
    <property type="entry name" value="Transl_elong_EFTs/EF1B"/>
</dbReference>
<dbReference type="InterPro" id="IPR014039">
    <property type="entry name" value="Transl_elong_EFTs/EF1B_dimer"/>
</dbReference>
<dbReference type="InterPro" id="IPR018101">
    <property type="entry name" value="Transl_elong_Ts_CS"/>
</dbReference>
<dbReference type="InterPro" id="IPR009060">
    <property type="entry name" value="UBA-like_sf"/>
</dbReference>
<dbReference type="NCBIfam" id="TIGR00116">
    <property type="entry name" value="tsf"/>
    <property type="match status" value="1"/>
</dbReference>
<dbReference type="PANTHER" id="PTHR11741">
    <property type="entry name" value="ELONGATION FACTOR TS"/>
    <property type="match status" value="1"/>
</dbReference>
<dbReference type="PANTHER" id="PTHR11741:SF0">
    <property type="entry name" value="ELONGATION FACTOR TS, MITOCHONDRIAL"/>
    <property type="match status" value="1"/>
</dbReference>
<dbReference type="Pfam" id="PF00889">
    <property type="entry name" value="EF_TS"/>
    <property type="match status" value="1"/>
</dbReference>
<dbReference type="SUPFAM" id="SSF54713">
    <property type="entry name" value="Elongation factor Ts (EF-Ts), dimerisation domain"/>
    <property type="match status" value="2"/>
</dbReference>
<dbReference type="SUPFAM" id="SSF46934">
    <property type="entry name" value="UBA-like"/>
    <property type="match status" value="1"/>
</dbReference>
<dbReference type="PROSITE" id="PS01126">
    <property type="entry name" value="EF_TS_1"/>
    <property type="match status" value="1"/>
</dbReference>
<dbReference type="PROSITE" id="PS01127">
    <property type="entry name" value="EF_TS_2"/>
    <property type="match status" value="1"/>
</dbReference>
<keyword id="KW-0963">Cytoplasm</keyword>
<keyword id="KW-0251">Elongation factor</keyword>
<keyword id="KW-0648">Protein biosynthesis</keyword>
<gene>
    <name evidence="1" type="primary">tsf</name>
    <name type="ordered locus">STY0240</name>
    <name type="ordered locus">t0218</name>
</gene>
<accession>P64053</accession>
<accession>Q8XGS0</accession>
<feature type="chain" id="PRO_0000161188" description="Elongation factor Ts">
    <location>
        <begin position="1"/>
        <end position="283"/>
    </location>
</feature>
<feature type="region of interest" description="Involved in Mg(2+) ion dislocation from EF-Tu" evidence="1">
    <location>
        <begin position="80"/>
        <end position="83"/>
    </location>
</feature>
<name>EFTS_SALTI</name>
<organism>
    <name type="scientific">Salmonella typhi</name>
    <dbReference type="NCBI Taxonomy" id="90370"/>
    <lineage>
        <taxon>Bacteria</taxon>
        <taxon>Pseudomonadati</taxon>
        <taxon>Pseudomonadota</taxon>
        <taxon>Gammaproteobacteria</taxon>
        <taxon>Enterobacterales</taxon>
        <taxon>Enterobacteriaceae</taxon>
        <taxon>Salmonella</taxon>
    </lineage>
</organism>
<reference key="1">
    <citation type="journal article" date="2001" name="Nature">
        <title>Complete genome sequence of a multiple drug resistant Salmonella enterica serovar Typhi CT18.</title>
        <authorList>
            <person name="Parkhill J."/>
            <person name="Dougan G."/>
            <person name="James K.D."/>
            <person name="Thomson N.R."/>
            <person name="Pickard D."/>
            <person name="Wain J."/>
            <person name="Churcher C.M."/>
            <person name="Mungall K.L."/>
            <person name="Bentley S.D."/>
            <person name="Holden M.T.G."/>
            <person name="Sebaihia M."/>
            <person name="Baker S."/>
            <person name="Basham D."/>
            <person name="Brooks K."/>
            <person name="Chillingworth T."/>
            <person name="Connerton P."/>
            <person name="Cronin A."/>
            <person name="Davis P."/>
            <person name="Davies R.M."/>
            <person name="Dowd L."/>
            <person name="White N."/>
            <person name="Farrar J."/>
            <person name="Feltwell T."/>
            <person name="Hamlin N."/>
            <person name="Haque A."/>
            <person name="Hien T.T."/>
            <person name="Holroyd S."/>
            <person name="Jagels K."/>
            <person name="Krogh A."/>
            <person name="Larsen T.S."/>
            <person name="Leather S."/>
            <person name="Moule S."/>
            <person name="O'Gaora P."/>
            <person name="Parry C."/>
            <person name="Quail M.A."/>
            <person name="Rutherford K.M."/>
            <person name="Simmonds M."/>
            <person name="Skelton J."/>
            <person name="Stevens K."/>
            <person name="Whitehead S."/>
            <person name="Barrell B.G."/>
        </authorList>
    </citation>
    <scope>NUCLEOTIDE SEQUENCE [LARGE SCALE GENOMIC DNA]</scope>
    <source>
        <strain>CT18</strain>
    </source>
</reference>
<reference key="2">
    <citation type="journal article" date="2003" name="J. Bacteriol.">
        <title>Comparative genomics of Salmonella enterica serovar Typhi strains Ty2 and CT18.</title>
        <authorList>
            <person name="Deng W."/>
            <person name="Liou S.-R."/>
            <person name="Plunkett G. III"/>
            <person name="Mayhew G.F."/>
            <person name="Rose D.J."/>
            <person name="Burland V."/>
            <person name="Kodoyianni V."/>
            <person name="Schwartz D.C."/>
            <person name="Blattner F.R."/>
        </authorList>
    </citation>
    <scope>NUCLEOTIDE SEQUENCE [LARGE SCALE GENOMIC DNA]</scope>
    <source>
        <strain>ATCC 700931 / Ty2</strain>
    </source>
</reference>
<sequence>MAEITASLVKELRERTGAGMMDCKKALTEANGDIELAIENMRKSGAIKAAKKAGNVAADGVIKTKIDGNVAFILEVNCQTDFVAKDAGFQAFADKVLDAAVAGKITDVEVLKAQFEEERVALVAKIGENINIRRVASLEGDVLGSYQHGARIGVLVAAKGADEELVKQLAMHVAASKPEFVKPEDVSADVVEKEYQVQLDIAMQSGKPKEIAEKMVEGRMKKFTGEVSLTGQPFVMEPSKSVGQLLKEHNADVTGFIRFEVGEGIEKVETDFAAEVAAMSKQS</sequence>
<proteinExistence type="inferred from homology"/>